<reference key="1">
    <citation type="journal article" date="1997" name="Science">
        <title>The complete genome sequence of Escherichia coli K-12.</title>
        <authorList>
            <person name="Blattner F.R."/>
            <person name="Plunkett G. III"/>
            <person name="Bloch C.A."/>
            <person name="Perna N.T."/>
            <person name="Burland V."/>
            <person name="Riley M."/>
            <person name="Collado-Vides J."/>
            <person name="Glasner J.D."/>
            <person name="Rode C.K."/>
            <person name="Mayhew G.F."/>
            <person name="Gregor J."/>
            <person name="Davis N.W."/>
            <person name="Kirkpatrick H.A."/>
            <person name="Goeden M.A."/>
            <person name="Rose D.J."/>
            <person name="Mau B."/>
            <person name="Shao Y."/>
        </authorList>
    </citation>
    <scope>NUCLEOTIDE SEQUENCE [LARGE SCALE GENOMIC DNA]</scope>
    <source>
        <strain>K12 / MG1655 / ATCC 47076</strain>
    </source>
</reference>
<reference key="2">
    <citation type="journal article" date="2006" name="Mol. Syst. Biol.">
        <title>Highly accurate genome sequences of Escherichia coli K-12 strains MG1655 and W3110.</title>
        <authorList>
            <person name="Hayashi K."/>
            <person name="Morooka N."/>
            <person name="Yamamoto Y."/>
            <person name="Fujita K."/>
            <person name="Isono K."/>
            <person name="Choi S."/>
            <person name="Ohtsubo E."/>
            <person name="Baba T."/>
            <person name="Wanner B.L."/>
            <person name="Mori H."/>
            <person name="Horiuchi T."/>
        </authorList>
    </citation>
    <scope>NUCLEOTIDE SEQUENCE [LARGE SCALE GENOMIC DNA]</scope>
    <source>
        <strain>K12 / W3110 / ATCC 27325 / DSM 5911</strain>
    </source>
</reference>
<name>LYSQ_ECOLI</name>
<accession>P76159</accession>
<accession>Q2MB87</accession>
<gene>
    <name type="primary">rrrQ</name>
    <name type="synonym">arrQ</name>
    <name type="synonym">ydfQ</name>
    <name type="ordered locus">b1554</name>
    <name type="ordered locus">JW1546</name>
</gene>
<proteinExistence type="inferred from homology"/>
<organism>
    <name type="scientific">Escherichia coli (strain K12)</name>
    <dbReference type="NCBI Taxonomy" id="83333"/>
    <lineage>
        <taxon>Bacteria</taxon>
        <taxon>Pseudomonadati</taxon>
        <taxon>Pseudomonadota</taxon>
        <taxon>Gammaproteobacteria</taxon>
        <taxon>Enterobacterales</taxon>
        <taxon>Enterobacteriaceae</taxon>
        <taxon>Escherichia</taxon>
    </lineage>
</organism>
<feature type="chain" id="PRO_0000218110" description="Probable prophage lysozyme">
    <location>
        <begin position="1"/>
        <end position="177"/>
    </location>
</feature>
<feature type="active site" description="Proton donor" evidence="1">
    <location>
        <position position="35"/>
    </location>
</feature>
<feature type="active site" description="Nucleophile" evidence="1">
    <location>
        <position position="44"/>
    </location>
</feature>
<comment type="function">
    <text evidence="1">Essential for lysis of bacterial cell wall, by showing cell wall hydrolyzing activity.</text>
</comment>
<comment type="catalytic activity">
    <reaction>
        <text>Hydrolysis of (1-&gt;4)-beta-linkages between N-acetylmuramic acid and N-acetyl-D-glucosamine residues in a peptidoglycan and between N-acetyl-D-glucosamine residues in chitodextrins.</text>
        <dbReference type="EC" id="3.2.1.17"/>
    </reaction>
</comment>
<comment type="similarity">
    <text evidence="2">Belongs to the glycosyl hydrolase 24 family.</text>
</comment>
<keyword id="KW-0929">Antimicrobial</keyword>
<keyword id="KW-0081">Bacteriolytic enzyme</keyword>
<keyword id="KW-0326">Glycosidase</keyword>
<keyword id="KW-0378">Hydrolase</keyword>
<keyword id="KW-1185">Reference proteome</keyword>
<protein>
    <recommendedName>
        <fullName evidence="2">Probable prophage lysozyme</fullName>
        <ecNumber>3.2.1.17</ecNumber>
    </recommendedName>
    <alternativeName>
        <fullName>Endolysin</fullName>
    </alternativeName>
    <alternativeName>
        <fullName>Lysis protein</fullName>
    </alternativeName>
    <alternativeName>
        <fullName>Muramidase</fullName>
    </alternativeName>
    <alternativeName>
        <fullName>Probable lysozyme from lambdoid prophage Qin</fullName>
    </alternativeName>
</protein>
<evidence type="ECO:0000250" key="1"/>
<evidence type="ECO:0000305" key="2"/>
<dbReference type="EC" id="3.2.1.17"/>
<dbReference type="EMBL" id="U00096">
    <property type="protein sequence ID" value="AAC74627.1"/>
    <property type="molecule type" value="Genomic_DNA"/>
</dbReference>
<dbReference type="EMBL" id="AP009048">
    <property type="protein sequence ID" value="BAE76469.1"/>
    <property type="molecule type" value="Genomic_DNA"/>
</dbReference>
<dbReference type="PIR" id="E64910">
    <property type="entry name" value="E64910"/>
</dbReference>
<dbReference type="RefSeq" id="NP_416072.1">
    <property type="nucleotide sequence ID" value="NC_000913.3"/>
</dbReference>
<dbReference type="RefSeq" id="WP_001092971.1">
    <property type="nucleotide sequence ID" value="NZ_SSUV01000066.1"/>
</dbReference>
<dbReference type="SMR" id="P76159"/>
<dbReference type="BioGRID" id="4259501">
    <property type="interactions" value="7"/>
</dbReference>
<dbReference type="FunCoup" id="P76159">
    <property type="interactions" value="18"/>
</dbReference>
<dbReference type="IntAct" id="P76159">
    <property type="interactions" value="2"/>
</dbReference>
<dbReference type="STRING" id="511145.b1554"/>
<dbReference type="PaxDb" id="511145-b1554"/>
<dbReference type="EnsemblBacteria" id="AAC74627">
    <property type="protein sequence ID" value="AAC74627"/>
    <property type="gene ID" value="b1554"/>
</dbReference>
<dbReference type="GeneID" id="946100"/>
<dbReference type="KEGG" id="ecj:JW1546"/>
<dbReference type="KEGG" id="eco:b1554"/>
<dbReference type="KEGG" id="ecoc:C3026_08970"/>
<dbReference type="PATRIC" id="fig|1411691.4.peg.710"/>
<dbReference type="EchoBASE" id="EB3590"/>
<dbReference type="eggNOG" id="COG3772">
    <property type="taxonomic scope" value="Bacteria"/>
</dbReference>
<dbReference type="HOGENOM" id="CLU_091641_8_0_6"/>
<dbReference type="InParanoid" id="P76159"/>
<dbReference type="OMA" id="KDCRIRS"/>
<dbReference type="OrthoDB" id="8141296at2"/>
<dbReference type="PhylomeDB" id="P76159"/>
<dbReference type="BioCyc" id="EcoCyc:G6827-MONOMER"/>
<dbReference type="PRO" id="PR:P76159"/>
<dbReference type="Proteomes" id="UP000000625">
    <property type="component" value="Chromosome"/>
</dbReference>
<dbReference type="GO" id="GO:0003796">
    <property type="term" value="F:lysozyme activity"/>
    <property type="evidence" value="ECO:0000318"/>
    <property type="project" value="GO_Central"/>
</dbReference>
<dbReference type="GO" id="GO:0016998">
    <property type="term" value="P:cell wall macromolecule catabolic process"/>
    <property type="evidence" value="ECO:0007669"/>
    <property type="project" value="InterPro"/>
</dbReference>
<dbReference type="GO" id="GO:0042742">
    <property type="term" value="P:defense response to bacterium"/>
    <property type="evidence" value="ECO:0007669"/>
    <property type="project" value="UniProtKB-KW"/>
</dbReference>
<dbReference type="GO" id="GO:0031640">
    <property type="term" value="P:killing of cells of another organism"/>
    <property type="evidence" value="ECO:0007669"/>
    <property type="project" value="UniProtKB-KW"/>
</dbReference>
<dbReference type="GO" id="GO:0009253">
    <property type="term" value="P:peptidoglycan catabolic process"/>
    <property type="evidence" value="ECO:0007669"/>
    <property type="project" value="InterPro"/>
</dbReference>
<dbReference type="CDD" id="cd16900">
    <property type="entry name" value="endolysin_R21-like"/>
    <property type="match status" value="1"/>
</dbReference>
<dbReference type="Gene3D" id="1.10.530.40">
    <property type="match status" value="1"/>
</dbReference>
<dbReference type="HAMAP" id="MF_04110">
    <property type="entry name" value="ENDOLYSIN_T4"/>
    <property type="match status" value="1"/>
</dbReference>
<dbReference type="HAMAP" id="MF_04136">
    <property type="entry name" value="SAR_ENDOLYSIN"/>
    <property type="match status" value="1"/>
</dbReference>
<dbReference type="InterPro" id="IPR051018">
    <property type="entry name" value="Bacteriophage_GH24"/>
</dbReference>
<dbReference type="InterPro" id="IPR034690">
    <property type="entry name" value="Endolysin_T4_type"/>
</dbReference>
<dbReference type="InterPro" id="IPR002196">
    <property type="entry name" value="Glyco_hydro_24"/>
</dbReference>
<dbReference type="InterPro" id="IPR023346">
    <property type="entry name" value="Lysozyme-like_dom_sf"/>
</dbReference>
<dbReference type="InterPro" id="IPR023347">
    <property type="entry name" value="Lysozyme_dom_sf"/>
</dbReference>
<dbReference type="InterPro" id="IPR043688">
    <property type="entry name" value="SAR_endolysin-like"/>
</dbReference>
<dbReference type="PANTHER" id="PTHR38107">
    <property type="match status" value="1"/>
</dbReference>
<dbReference type="PANTHER" id="PTHR38107:SF3">
    <property type="entry name" value="LYSOZYME RRRD-RELATED"/>
    <property type="match status" value="1"/>
</dbReference>
<dbReference type="Pfam" id="PF00959">
    <property type="entry name" value="Phage_lysozyme"/>
    <property type="match status" value="1"/>
</dbReference>
<dbReference type="SUPFAM" id="SSF53955">
    <property type="entry name" value="Lysozyme-like"/>
    <property type="match status" value="1"/>
</dbReference>
<sequence>MNTKIRYGLSAAVLALIGAGASAPQILDQFLDEKEGNHTMAYRDGSGIWTICRGATVVDGKTVFPNMKLSKEKCDQVNAIERDKALAWVERNIKVPLTEPQKAGIASFCPYNIGPGKCFPSTFYKRLNAGDRKGACEAIRWWIKDGGRDCRIRSNNCYGQVIRRDQESALTCWGIEQ</sequence>